<gene>
    <name type="primary">citF</name>
</gene>
<feature type="chain" id="PRO_0000089754" description="Citrate lyase alpha chain">
    <location>
        <begin position="1"/>
        <end position="508"/>
    </location>
</feature>
<sequence length="508" mass="54668">MKETVAMLNQQYVMPNGLTPYAGVTAKSPWLASESEKRQRKICDSLETAIRRSGLQNGMTISFHHAFRGGDKVVNMVVAKLAEMGFRDLTLASSSLIDAHWPLIEHIKNGVIRQIYTSGLRGKLGEEISAGLMENPVQIHSHGGRVQLIQSGELSIDVAFLGVPCCDEFGNANGFSGKSRCGSLGYARVDAEHAKCVVLLTEEWVDYPNYPASIAQDQVDLIVQVDEVGDPQKITAGAIRLTSNPRELLIARQAAKVVEHSGYFKEGFSLQTGTGGASLAVTRFLEDKMRRNGITASFGLGGITGTMVDLHEKGLIKTLLDTQSFDGDAARSLAQNPNHVEISTNQYASPGSKGASCERLNVVMLSALEIDIDFNVNVMTGSNGVLRGASGGHSDTAAGADLTIITAPLVRGRIPCVVEKVLTRVTPGASVDVLVTDHGIAVNPARQDLIDNLRSAGIPLMTIEELQQRAELLTGKPQPIEFTDRVVAVVRYRDGSVIDVIRQVKNSD</sequence>
<organism>
    <name type="scientific">Klebsiella pneumoniae</name>
    <dbReference type="NCBI Taxonomy" id="573"/>
    <lineage>
        <taxon>Bacteria</taxon>
        <taxon>Pseudomonadati</taxon>
        <taxon>Pseudomonadota</taxon>
        <taxon>Gammaproteobacteria</taxon>
        <taxon>Enterobacterales</taxon>
        <taxon>Enterobacteriaceae</taxon>
        <taxon>Klebsiella/Raoultella group</taxon>
        <taxon>Klebsiella</taxon>
        <taxon>Klebsiella pneumoniae complex</taxon>
    </lineage>
</organism>
<proteinExistence type="evidence at protein level"/>
<protein>
    <recommendedName>
        <fullName>Citrate lyase alpha chain</fullName>
        <shortName>Citrase alpha chain</shortName>
        <ecNumber>4.1.3.6</ecNumber>
    </recommendedName>
    <alternativeName>
        <fullName>Citrate (pro-3S)-lyase alpha chain</fullName>
    </alternativeName>
    <alternativeName>
        <fullName>Citrate CoA-transferase subunit</fullName>
        <ecNumber>2.8.3.10</ecNumber>
    </alternativeName>
</protein>
<dbReference type="EC" id="4.1.3.6"/>
<dbReference type="EC" id="2.8.3.10"/>
<dbReference type="EMBL" id="X79817">
    <property type="protein sequence ID" value="CAA56217.1"/>
    <property type="molecule type" value="Genomic_DNA"/>
</dbReference>
<dbReference type="PIR" id="S60776">
    <property type="entry name" value="S60776"/>
</dbReference>
<dbReference type="RefSeq" id="WP_004222627.1">
    <property type="nucleotide sequence ID" value="NZ_WXZN01000037.1"/>
</dbReference>
<dbReference type="SMR" id="P45413"/>
<dbReference type="BioCyc" id="MetaCyc:MONOMER-16998"/>
<dbReference type="GO" id="GO:0009346">
    <property type="term" value="C:ATP-independent citrate lyase complex"/>
    <property type="evidence" value="ECO:0007669"/>
    <property type="project" value="InterPro"/>
</dbReference>
<dbReference type="GO" id="GO:0005737">
    <property type="term" value="C:cytoplasm"/>
    <property type="evidence" value="ECO:0007669"/>
    <property type="project" value="UniProtKB-SubCell"/>
</dbReference>
<dbReference type="GO" id="GO:0008815">
    <property type="term" value="F:citrate (pro-3S)-lyase activity"/>
    <property type="evidence" value="ECO:0007669"/>
    <property type="project" value="UniProtKB-EC"/>
</dbReference>
<dbReference type="GO" id="GO:0008814">
    <property type="term" value="F:citrate CoA-transferase activity"/>
    <property type="evidence" value="ECO:0007669"/>
    <property type="project" value="UniProtKB-EC"/>
</dbReference>
<dbReference type="GO" id="GO:0006084">
    <property type="term" value="P:acetyl-CoA metabolic process"/>
    <property type="evidence" value="ECO:0007669"/>
    <property type="project" value="InterPro"/>
</dbReference>
<dbReference type="Gene3D" id="3.40.1080.10">
    <property type="entry name" value="Glutaconate Coenzyme A-transferase"/>
    <property type="match status" value="2"/>
</dbReference>
<dbReference type="InterPro" id="IPR006472">
    <property type="entry name" value="Citrate_lyase_asu"/>
</dbReference>
<dbReference type="InterPro" id="IPR037171">
    <property type="entry name" value="NagB/RpiA_transferase-like"/>
</dbReference>
<dbReference type="NCBIfam" id="TIGR01584">
    <property type="entry name" value="citF"/>
    <property type="match status" value="1"/>
</dbReference>
<dbReference type="PANTHER" id="PTHR40596">
    <property type="entry name" value="CITRATE LYASE ALPHA CHAIN"/>
    <property type="match status" value="1"/>
</dbReference>
<dbReference type="PANTHER" id="PTHR40596:SF1">
    <property type="entry name" value="CITRATE LYASE ALPHA CHAIN"/>
    <property type="match status" value="1"/>
</dbReference>
<dbReference type="Pfam" id="PF04223">
    <property type="entry name" value="CitF"/>
    <property type="match status" value="1"/>
</dbReference>
<dbReference type="PIRSF" id="PIRSF009451">
    <property type="entry name" value="Citrt_lyas_alpha"/>
    <property type="match status" value="1"/>
</dbReference>
<dbReference type="SUPFAM" id="SSF100950">
    <property type="entry name" value="NagB/RpiA/CoA transferase-like"/>
    <property type="match status" value="2"/>
</dbReference>
<reference key="1">
    <citation type="journal article" date="1994" name="Mol. Microbiol.">
        <title>Klebsiella pneumoniae genes for citrate lyase and citrate lyase ligase: localization, sequencing, and expression.</title>
        <authorList>
            <person name="Bott M."/>
            <person name="Dimroth P."/>
        </authorList>
    </citation>
    <scope>NUCLEOTIDE SEQUENCE [GENOMIC DNA]</scope>
    <source>
        <strain>ATCC 13882 / NBRC 13541 / NCTC 8172</strain>
    </source>
</reference>
<reference key="2">
    <citation type="journal article" date="1976" name="J. Biol. Chem.">
        <title>Subunit and chemical composition of citrate lyase from Klebsiella pneumoniae.</title>
        <authorList>
            <person name="Singh M."/>
            <person name="Srere P.A."/>
            <person name="Klapper D.G."/>
            <person name="Capra J.D."/>
        </authorList>
    </citation>
    <scope>PROTEIN SEQUENCE OF 1-10</scope>
</reference>
<comment type="function">
    <text>Represents a citrate:acetyl-ACP transferase.</text>
</comment>
<comment type="catalytic activity">
    <reaction>
        <text>citrate = oxaloacetate + acetate</text>
        <dbReference type="Rhea" id="RHEA:10760"/>
        <dbReference type="ChEBI" id="CHEBI:16452"/>
        <dbReference type="ChEBI" id="CHEBI:16947"/>
        <dbReference type="ChEBI" id="CHEBI:30089"/>
        <dbReference type="EC" id="4.1.3.6"/>
    </reaction>
</comment>
<comment type="catalytic activity">
    <reaction>
        <text>citrate + acetyl-CoA = (3S)-citryl-CoA + acetate</text>
        <dbReference type="Rhea" id="RHEA:19405"/>
        <dbReference type="ChEBI" id="CHEBI:16947"/>
        <dbReference type="ChEBI" id="CHEBI:30089"/>
        <dbReference type="ChEBI" id="CHEBI:57288"/>
        <dbReference type="ChEBI" id="CHEBI:57321"/>
        <dbReference type="EC" id="2.8.3.10"/>
    </reaction>
</comment>
<comment type="subunit">
    <text>Oligomer with a subunit composition of (alpha,beta,gamma)6.</text>
</comment>
<comment type="subcellular location">
    <subcellularLocation>
        <location>Cytoplasm</location>
    </subcellularLocation>
</comment>
<accession>P45413</accession>
<name>CILA_KLEPN</name>
<keyword id="KW-0963">Cytoplasm</keyword>
<keyword id="KW-0903">Direct protein sequencing</keyword>
<keyword id="KW-0456">Lyase</keyword>
<keyword id="KW-0808">Transferase</keyword>